<proteinExistence type="evidence at protein level"/>
<keyword id="KW-1283">Bacterial microcompartment</keyword>
<keyword id="KW-0120">Carbon dioxide fixation</keyword>
<keyword id="KW-1282">Carboxysome</keyword>
<keyword id="KW-1185">Reference proteome</keyword>
<keyword id="KW-0677">Repeat</keyword>
<protein>
    <recommendedName>
        <fullName evidence="5">Carboxysome assembly protein CsoS2</fullName>
    </recommendedName>
    <alternativeName>
        <fullName>Carboxysome shell protein CsoS2</fullName>
    </alternativeName>
</protein>
<gene>
    <name evidence="5" type="primary">csoS2</name>
    <name type="ordered locus">PMT_1203</name>
</gene>
<dbReference type="EMBL" id="BX548175">
    <property type="protein sequence ID" value="CAE21378.1"/>
    <property type="molecule type" value="Genomic_DNA"/>
</dbReference>
<dbReference type="RefSeq" id="WP_011130574.1">
    <property type="nucleotide sequence ID" value="NC_005071.1"/>
</dbReference>
<dbReference type="SMR" id="Q7V6G0"/>
<dbReference type="KEGG" id="pmt:PMT_1203"/>
<dbReference type="eggNOG" id="ENOG502Z8T4">
    <property type="taxonomic scope" value="Bacteria"/>
</dbReference>
<dbReference type="HOGENOM" id="CLU_016451_1_0_3"/>
<dbReference type="OrthoDB" id="543713at2"/>
<dbReference type="Proteomes" id="UP000001423">
    <property type="component" value="Chromosome"/>
</dbReference>
<dbReference type="GO" id="GO:0031470">
    <property type="term" value="C:carboxysome"/>
    <property type="evidence" value="ECO:0007669"/>
    <property type="project" value="UniProtKB-SubCell"/>
</dbReference>
<dbReference type="GO" id="GO:0043886">
    <property type="term" value="F:structural constituent of carboxysome shell"/>
    <property type="evidence" value="ECO:0007669"/>
    <property type="project" value="InterPro"/>
</dbReference>
<dbReference type="GO" id="GO:0015977">
    <property type="term" value="P:carbon fixation"/>
    <property type="evidence" value="ECO:0007669"/>
    <property type="project" value="UniProtKB-KW"/>
</dbReference>
<dbReference type="InterPro" id="IPR020990">
    <property type="entry name" value="CSOS2/2B"/>
</dbReference>
<dbReference type="Pfam" id="PF12288">
    <property type="entry name" value="CsoS2_M"/>
    <property type="match status" value="2"/>
</dbReference>
<sequence>MAKQSSRELALERRKALSNSGKKSTTLNGSSPNRIRTASDARLTRTDQSFVKAGKESVQLTAPKREQLDTSFVASRESSGASRRQVKTIRNSSRELVLARRDELSRRGQPAAKSKDRTRAEVEKISSKVSQQDAAKKQVNDLASDQKGVDESSSKSLKSLDTVSRLSSRNSTSRPSAKRRSIQNPSRALVLARREAQSKHGKTAANQPTSAASVARQGDPDLSSREISQRVRELRSKSGATGKKRSGACRPCGPNRNGSKQAVAADAHWKVGLSETSTGQVVTGTQANRSSKTTGNEASTCRSITGTQYLGSEVFDTFCQSAPQPGQPLKVAVTNTSHGNRVTGNEVGRSEKVTGDEPGTCKTLTGTEYISANQANQYCGVSQPSPRKVGQSVTEDGRKVSGVMVGRSEKVTGDEAGSNRQLTGDQYLGVDPLPEGRSAEKVGSFNTLRGAGVTGTNVARSEYVTGNEPGSCKRVTGDEYVGPQQYNTFCGGKPNPEAAKVGLSLTNKSQTVSGTLTGRSELVTGDEPGTCKAVTGTPYSGVEQASGWCDTNSVREIQDRTPKLLGTPGAVMTGLQPGVGGVMTGAEKGACEPLTGTPYVGGDQLVQACGSDAPAGSNDHQGSSESSPWTHFSVQSPARAMQLQRDPRSGVTGTSYEQGSQITGPFNMAVDKITGTEQFRFDRKQRHFKSVPVEATPNDVSQTRPESRVTGEGQSAGLNITGDDWDRSERVTGTEGASARRRNPTRPGPMSAMPAADLKRNEEVSQPMSRVTGSSGNTDQGSLITVSGGARG</sequence>
<organism>
    <name type="scientific">Prochlorococcus marinus (strain MIT 9313)</name>
    <dbReference type="NCBI Taxonomy" id="74547"/>
    <lineage>
        <taxon>Bacteria</taxon>
        <taxon>Bacillati</taxon>
        <taxon>Cyanobacteriota</taxon>
        <taxon>Cyanophyceae</taxon>
        <taxon>Synechococcales</taxon>
        <taxon>Prochlorococcaceae</taxon>
        <taxon>Prochlorococcus</taxon>
    </lineage>
</organism>
<comment type="function">
    <text evidence="1 7">Required for alpha-carboxysome (Cb) assembly, mediates interaction between RuBisCO and the Cb shell. The protein is probably intrinsically disordered (Probable). The C-terminal repeats act as the encapsulation signal to target proteins to the Cb; they are necessary and sufficient to target both CsoS2 and foreign proteins to the Cb. The N-terminal repeats of this protein bind simultaneously to both subunits of RuBisCO. Probably also interacts with the major shell proteins (CsoS1); that interaction would increase the local concentration of CsoS2 so that it can condense RuBisCO and full carboxysomes can be formed (By similarity).</text>
</comment>
<comment type="subunit">
    <text evidence="7">Probably interacts with the carboxysome major shell protein CsoS1 via the N-terminal domain; this complex probably also interacts with RuBisCO.</text>
</comment>
<comment type="subcellular location">
    <subcellularLocation>
        <location evidence="6">Carboxysome</location>
    </subcellularLocation>
    <text evidence="3">This bacterium makes alpha-type carboxysomes.</text>
</comment>
<comment type="domain">
    <text evidence="1 7">Has 3 domains; the N-terminal domain has 4 short repeats, the central region has 6 longer repeats (Probable). The C-terminal domain has 2 repeats and a highly conserved C-terminal peptide. The C-repeats serve as the encapsulation signal for the alpha-carboxysome, and are able to target foreign proteins to this organelle (By similarity).</text>
</comment>
<comment type="PTM">
    <text evidence="8">Has been suggested to undergo ribosomal frameshifting, as does its ortholog in H.neapolitanus. The exact position of the putative frameshift is not given, but it would probably occur in the sixth M-repeat and remove the C-terminus.</text>
</comment>
<comment type="similarity">
    <text evidence="6">Belongs to the CsoS2 family.</text>
</comment>
<reference key="1">
    <citation type="journal article" date="2003" name="Nature">
        <title>Genome divergence in two Prochlorococcus ecotypes reflects oceanic niche differentiation.</title>
        <authorList>
            <person name="Rocap G."/>
            <person name="Larimer F.W."/>
            <person name="Lamerdin J.E."/>
            <person name="Malfatti S."/>
            <person name="Chain P."/>
            <person name="Ahlgren N.A."/>
            <person name="Arellano A."/>
            <person name="Coleman M."/>
            <person name="Hauser L."/>
            <person name="Hess W.R."/>
            <person name="Johnson Z.I."/>
            <person name="Land M.L."/>
            <person name="Lindell D."/>
            <person name="Post A.F."/>
            <person name="Regala W."/>
            <person name="Shah M."/>
            <person name="Shaw S.L."/>
            <person name="Steglich C."/>
            <person name="Sullivan M.B."/>
            <person name="Ting C.S."/>
            <person name="Tolonen A."/>
            <person name="Webb E.A."/>
            <person name="Zinser E.R."/>
            <person name="Chisholm S.W."/>
        </authorList>
    </citation>
    <scope>NUCLEOTIDE SEQUENCE [LARGE SCALE GENOMIC DNA]</scope>
    <source>
        <strain>MIT 9313</strain>
    </source>
</reference>
<reference key="2">
    <citation type="journal article" date="2015" name="Life">
        <title>Advances in Understanding Carboxysome Assembly in Prochlorococcus and Synechococcus Implicate CsoS2 as a Critical Component.</title>
        <authorList>
            <person name="Cai F."/>
            <person name="Dou Z."/>
            <person name="Bernstein S.L."/>
            <person name="Leverenz R."/>
            <person name="Williams E.B."/>
            <person name="Heinhorst S."/>
            <person name="Shively J."/>
            <person name="Cannon G.C."/>
            <person name="Kerfeld C.A."/>
        </authorList>
    </citation>
    <scope>FUNCTION</scope>
    <scope>SUBUNIT</scope>
    <scope>DOMAIN</scope>
    <source>
        <strain>MIT 9313</strain>
    </source>
</reference>
<reference key="3">
    <citation type="journal article" date="2016" name="J. Mol. Biol.">
        <title>Programmed Ribosomal Frameshifting Mediates Expression of the alpha-Carboxysome.</title>
        <authorList>
            <person name="Chaijarasphong T."/>
            <person name="Nichols R.J."/>
            <person name="Kortright K.E."/>
            <person name="Nixon C.F."/>
            <person name="Teng P.K."/>
            <person name="Oltrogge L.M."/>
            <person name="Savage D.F."/>
        </authorList>
    </citation>
    <scope>PUTATIVE RIBOSOMAL FRAMESHIFT</scope>
</reference>
<feature type="chain" id="PRO_0000452069" description="Carboxysome assembly protein CsoS2">
    <location>
        <begin position="1"/>
        <end position="792"/>
    </location>
</feature>
<feature type="repeat" description="N-repeat 1" evidence="3">
    <location>
        <begin position="7"/>
        <end position="22"/>
    </location>
</feature>
<feature type="repeat" description="N-repeat 2" evidence="3">
    <location>
        <begin position="94"/>
        <end position="109"/>
    </location>
</feature>
<feature type="repeat" description="N-repeat 3" evidence="3">
    <location>
        <begin position="187"/>
        <end position="202"/>
    </location>
</feature>
<feature type="repeat" description="N-repeat 4" evidence="3">
    <location>
        <begin position="225"/>
        <end position="240"/>
    </location>
</feature>
<feature type="repeat" description="M-repeat 1" evidence="3">
    <location>
        <begin position="270"/>
        <end position="319"/>
    </location>
</feature>
<feature type="repeat" description="M-repeat 2" evidence="3">
    <location>
        <begin position="330"/>
        <end position="379"/>
    </location>
</feature>
<feature type="repeat" description="M-repeat 3" evidence="3">
    <location>
        <begin position="388"/>
        <end position="427"/>
    </location>
</feature>
<feature type="repeat" description="M-repeat 4" evidence="3">
    <location>
        <begin position="441"/>
        <end position="490"/>
    </location>
</feature>
<feature type="repeat" description="M-repeat 5" evidence="3">
    <location>
        <begin position="500"/>
        <end position="549"/>
    </location>
</feature>
<feature type="repeat" description="M-repeat 6" evidence="3">
    <location>
        <begin position="560"/>
        <end position="609"/>
    </location>
</feature>
<feature type="repeat" description="C-repeat 1" evidence="4">
    <location>
        <begin position="633"/>
        <end position="678"/>
    </location>
</feature>
<feature type="repeat" description="C-repeat 2" evidence="4">
    <location>
        <begin position="703"/>
        <end position="738"/>
    </location>
</feature>
<feature type="region of interest" description="Disordered" evidence="2">
    <location>
        <begin position="1"/>
        <end position="259"/>
    </location>
</feature>
<feature type="region of interest" description="N-terminal domain" evidence="7">
    <location>
        <begin position="1"/>
        <end position="235"/>
    </location>
</feature>
<feature type="region of interest" description="Middle region" evidence="7">
    <location>
        <begin position="240"/>
        <end position="615"/>
    </location>
</feature>
<feature type="region of interest" description="Disordered" evidence="2">
    <location>
        <begin position="280"/>
        <end position="299"/>
    </location>
</feature>
<feature type="region of interest" description="Disordered" evidence="2">
    <location>
        <begin position="338"/>
        <end position="359"/>
    </location>
</feature>
<feature type="region of interest" description="Disordered" evidence="2">
    <location>
        <begin position="608"/>
        <end position="662"/>
    </location>
</feature>
<feature type="region of interest" description="C-terminal domain" evidence="7">
    <location>
        <begin position="616"/>
        <end position="792"/>
    </location>
</feature>
<feature type="region of interest" description="Disordered" evidence="2">
    <location>
        <begin position="687"/>
        <end position="792"/>
    </location>
</feature>
<feature type="region of interest" description="C-terminal peptide (CTP)" evidence="8">
    <location>
        <begin position="763"/>
        <end position="792"/>
    </location>
</feature>
<feature type="compositionally biased region" description="Basic and acidic residues" evidence="2">
    <location>
        <begin position="1"/>
        <end position="15"/>
    </location>
</feature>
<feature type="compositionally biased region" description="Polar residues" evidence="2">
    <location>
        <begin position="17"/>
        <end position="36"/>
    </location>
</feature>
<feature type="compositionally biased region" description="Polar residues" evidence="2">
    <location>
        <begin position="69"/>
        <end position="82"/>
    </location>
</feature>
<feature type="compositionally biased region" description="Basic and acidic residues" evidence="2">
    <location>
        <begin position="97"/>
        <end position="106"/>
    </location>
</feature>
<feature type="compositionally biased region" description="Basic and acidic residues" evidence="2">
    <location>
        <begin position="113"/>
        <end position="126"/>
    </location>
</feature>
<feature type="compositionally biased region" description="Polar residues" evidence="2">
    <location>
        <begin position="161"/>
        <end position="175"/>
    </location>
</feature>
<feature type="compositionally biased region" description="Basic and acidic residues" evidence="2">
    <location>
        <begin position="218"/>
        <end position="236"/>
    </location>
</feature>
<feature type="compositionally biased region" description="Polar residues" evidence="2">
    <location>
        <begin position="618"/>
        <end position="636"/>
    </location>
</feature>
<feature type="compositionally biased region" description="Polar residues" evidence="2">
    <location>
        <begin position="651"/>
        <end position="662"/>
    </location>
</feature>
<feature type="compositionally biased region" description="Polar residues" evidence="2">
    <location>
        <begin position="764"/>
        <end position="785"/>
    </location>
</feature>
<accession>Q7V6G0</accession>
<evidence type="ECO:0000250" key="1">
    <source>
        <dbReference type="UniProtKB" id="O85041"/>
    </source>
</evidence>
<evidence type="ECO:0000256" key="2">
    <source>
        <dbReference type="SAM" id="MobiDB-lite"/>
    </source>
</evidence>
<evidence type="ECO:0000269" key="3">
    <source>
    </source>
</evidence>
<evidence type="ECO:0000269" key="4">
    <source>
    </source>
</evidence>
<evidence type="ECO:0000303" key="5">
    <source>
    </source>
</evidence>
<evidence type="ECO:0000305" key="6"/>
<evidence type="ECO:0000305" key="7">
    <source>
    </source>
</evidence>
<evidence type="ECO:0000305" key="8">
    <source>
    </source>
</evidence>
<name>CSOS2_PROMM</name>